<sequence length="415" mass="47007">MAQANLSEILFKPKFKHPETSTLVRRTHCNHVVNIHSALDGDTANHWYRMINRLMWTWRGIDPLEIEEVLSRIACSKAEHSNNELLDTVVGYRNGNWIYEWANQGMMWQQKAMEETDPGSAGQFWLNAANLYSIASYPHLKGDELSEQAEVLSNRAYEEAAKYLPYTLKELTFPISDGGSLSGFLHMPTVGSAPFPTVLMCGGLDTLQSDYHRLFRDYLEPKGIAMLTIDLPSVGASSRWKLTQDTSYLHQQVLQALADVPWVDHQRVSVFGFRFGANVAVRLGYLEPQRVRAVACLGPIVHHLLCNSDSLRKVPDMYMDVMASRLGMADSTDETLNTEMNRYSLKTQGLLGRRCQTPMLAGFWENDPFSPKEEAKLICSSSADGKLLAIPSKPLYENFHRALLQTSEWLEDKMR</sequence>
<organism>
    <name type="scientific">Yersinia pestis</name>
    <dbReference type="NCBI Taxonomy" id="632"/>
    <lineage>
        <taxon>Bacteria</taxon>
        <taxon>Pseudomonadati</taxon>
        <taxon>Pseudomonadota</taxon>
        <taxon>Gammaproteobacteria</taxon>
        <taxon>Enterobacterales</taxon>
        <taxon>Yersiniaceae</taxon>
        <taxon>Yersinia</taxon>
    </lineage>
</organism>
<accession>Q8D170</accession>
<accession>Q0WC62</accession>
<accession>Q8ZC06</accession>
<feature type="chain" id="PRO_0000197163" description="Esterase FrsA">
    <location>
        <begin position="1"/>
        <end position="415"/>
    </location>
</feature>
<name>FRSA_YERPE</name>
<proteinExistence type="inferred from homology"/>
<comment type="function">
    <text evidence="1">Catalyzes the hydrolysis of esters.</text>
</comment>
<comment type="catalytic activity">
    <reaction evidence="1">
        <text>a carboxylic ester + H2O = an alcohol + a carboxylate + H(+)</text>
        <dbReference type="Rhea" id="RHEA:21164"/>
        <dbReference type="ChEBI" id="CHEBI:15377"/>
        <dbReference type="ChEBI" id="CHEBI:15378"/>
        <dbReference type="ChEBI" id="CHEBI:29067"/>
        <dbReference type="ChEBI" id="CHEBI:30879"/>
        <dbReference type="ChEBI" id="CHEBI:33308"/>
        <dbReference type="EC" id="3.1.1.1"/>
    </reaction>
</comment>
<comment type="similarity">
    <text evidence="1">Belongs to the FrsA family.</text>
</comment>
<comment type="sequence caution" evidence="2">
    <conflict type="erroneous initiation">
        <sequence resource="EMBL-CDS" id="AAM84545"/>
    </conflict>
</comment>
<comment type="sequence caution" evidence="2">
    <conflict type="erroneous initiation">
        <sequence resource="EMBL-CDS" id="AAS60975"/>
    </conflict>
</comment>
<protein>
    <recommendedName>
        <fullName evidence="1">Esterase FrsA</fullName>
        <ecNumber evidence="1">3.1.1.1</ecNumber>
    </recommendedName>
</protein>
<gene>
    <name evidence="1" type="primary">frsA</name>
    <name type="ordered locus">YPO3224</name>
    <name type="ordered locus">y0964</name>
    <name type="ordered locus">YP_0709</name>
</gene>
<reference key="1">
    <citation type="journal article" date="2001" name="Nature">
        <title>Genome sequence of Yersinia pestis, the causative agent of plague.</title>
        <authorList>
            <person name="Parkhill J."/>
            <person name="Wren B.W."/>
            <person name="Thomson N.R."/>
            <person name="Titball R.W."/>
            <person name="Holden M.T.G."/>
            <person name="Prentice M.B."/>
            <person name="Sebaihia M."/>
            <person name="James K.D."/>
            <person name="Churcher C.M."/>
            <person name="Mungall K.L."/>
            <person name="Baker S."/>
            <person name="Basham D."/>
            <person name="Bentley S.D."/>
            <person name="Brooks K."/>
            <person name="Cerdeno-Tarraga A.-M."/>
            <person name="Chillingworth T."/>
            <person name="Cronin A."/>
            <person name="Davies R.M."/>
            <person name="Davis P."/>
            <person name="Dougan G."/>
            <person name="Feltwell T."/>
            <person name="Hamlin N."/>
            <person name="Holroyd S."/>
            <person name="Jagels K."/>
            <person name="Karlyshev A.V."/>
            <person name="Leather S."/>
            <person name="Moule S."/>
            <person name="Oyston P.C.F."/>
            <person name="Quail M.A."/>
            <person name="Rutherford K.M."/>
            <person name="Simmonds M."/>
            <person name="Skelton J."/>
            <person name="Stevens K."/>
            <person name="Whitehead S."/>
            <person name="Barrell B.G."/>
        </authorList>
    </citation>
    <scope>NUCLEOTIDE SEQUENCE [LARGE SCALE GENOMIC DNA]</scope>
    <source>
        <strain>CO-92 / Biovar Orientalis</strain>
    </source>
</reference>
<reference key="2">
    <citation type="journal article" date="2002" name="J. Bacteriol.">
        <title>Genome sequence of Yersinia pestis KIM.</title>
        <authorList>
            <person name="Deng W."/>
            <person name="Burland V."/>
            <person name="Plunkett G. III"/>
            <person name="Boutin A."/>
            <person name="Mayhew G.F."/>
            <person name="Liss P."/>
            <person name="Perna N.T."/>
            <person name="Rose D.J."/>
            <person name="Mau B."/>
            <person name="Zhou S."/>
            <person name="Schwartz D.C."/>
            <person name="Fetherston J.D."/>
            <person name="Lindler L.E."/>
            <person name="Brubaker R.R."/>
            <person name="Plano G.V."/>
            <person name="Straley S.C."/>
            <person name="McDonough K.A."/>
            <person name="Nilles M.L."/>
            <person name="Matson J.S."/>
            <person name="Blattner F.R."/>
            <person name="Perry R.D."/>
        </authorList>
    </citation>
    <scope>NUCLEOTIDE SEQUENCE [LARGE SCALE GENOMIC DNA]</scope>
    <source>
        <strain>KIM10+ / Biovar Mediaevalis</strain>
    </source>
</reference>
<reference key="3">
    <citation type="journal article" date="2004" name="DNA Res.">
        <title>Complete genome sequence of Yersinia pestis strain 91001, an isolate avirulent to humans.</title>
        <authorList>
            <person name="Song Y."/>
            <person name="Tong Z."/>
            <person name="Wang J."/>
            <person name="Wang L."/>
            <person name="Guo Z."/>
            <person name="Han Y."/>
            <person name="Zhang J."/>
            <person name="Pei D."/>
            <person name="Zhou D."/>
            <person name="Qin H."/>
            <person name="Pang X."/>
            <person name="Han Y."/>
            <person name="Zhai J."/>
            <person name="Li M."/>
            <person name="Cui B."/>
            <person name="Qi Z."/>
            <person name="Jin L."/>
            <person name="Dai R."/>
            <person name="Chen F."/>
            <person name="Li S."/>
            <person name="Ye C."/>
            <person name="Du Z."/>
            <person name="Lin W."/>
            <person name="Wang J."/>
            <person name="Yu J."/>
            <person name="Yang H."/>
            <person name="Wang J."/>
            <person name="Huang P."/>
            <person name="Yang R."/>
        </authorList>
    </citation>
    <scope>NUCLEOTIDE SEQUENCE [LARGE SCALE GENOMIC DNA]</scope>
    <source>
        <strain>91001 / Biovar Mediaevalis</strain>
    </source>
</reference>
<evidence type="ECO:0000255" key="1">
    <source>
        <dbReference type="HAMAP-Rule" id="MF_01063"/>
    </source>
</evidence>
<evidence type="ECO:0000305" key="2"/>
<dbReference type="EC" id="3.1.1.1" evidence="1"/>
<dbReference type="EMBL" id="AL590842">
    <property type="protein sequence ID" value="CAL21818.1"/>
    <property type="molecule type" value="Genomic_DNA"/>
</dbReference>
<dbReference type="EMBL" id="AE009952">
    <property type="protein sequence ID" value="AAM84545.1"/>
    <property type="status" value="ALT_INIT"/>
    <property type="molecule type" value="Genomic_DNA"/>
</dbReference>
<dbReference type="EMBL" id="AE017042">
    <property type="protein sequence ID" value="AAS60975.1"/>
    <property type="status" value="ALT_INIT"/>
    <property type="molecule type" value="Genomic_DNA"/>
</dbReference>
<dbReference type="PIR" id="AG0391">
    <property type="entry name" value="AG0391"/>
</dbReference>
<dbReference type="RefSeq" id="WP_002208703.1">
    <property type="nucleotide sequence ID" value="NZ_WUCM01000034.1"/>
</dbReference>
<dbReference type="RefSeq" id="YP_002348126.1">
    <property type="nucleotide sequence ID" value="NC_003143.1"/>
</dbReference>
<dbReference type="SMR" id="Q8D170"/>
<dbReference type="STRING" id="214092.YPO3224"/>
<dbReference type="ESTHER" id="yerpe-y3224">
    <property type="family name" value="Duf_1100-R"/>
</dbReference>
<dbReference type="PaxDb" id="214092-YPO3224"/>
<dbReference type="EnsemblBacteria" id="AAS60975">
    <property type="protein sequence ID" value="AAS60975"/>
    <property type="gene ID" value="YP_0709"/>
</dbReference>
<dbReference type="GeneID" id="57975494"/>
<dbReference type="KEGG" id="ype:YPO3224"/>
<dbReference type="KEGG" id="ypk:y0964"/>
<dbReference type="KEGG" id="ypm:YP_0709"/>
<dbReference type="PATRIC" id="fig|1028802.3.peg.1603"/>
<dbReference type="eggNOG" id="COG1073">
    <property type="taxonomic scope" value="Bacteria"/>
</dbReference>
<dbReference type="HOGENOM" id="CLU_036819_0_0_6"/>
<dbReference type="OMA" id="NIPWVDH"/>
<dbReference type="OrthoDB" id="5590073at2"/>
<dbReference type="Proteomes" id="UP000000815">
    <property type="component" value="Chromosome"/>
</dbReference>
<dbReference type="Proteomes" id="UP000001019">
    <property type="component" value="Chromosome"/>
</dbReference>
<dbReference type="Proteomes" id="UP000002490">
    <property type="component" value="Chromosome"/>
</dbReference>
<dbReference type="GO" id="GO:0106435">
    <property type="term" value="F:carboxylesterase activity"/>
    <property type="evidence" value="ECO:0007669"/>
    <property type="project" value="UniProtKB-EC"/>
</dbReference>
<dbReference type="GO" id="GO:0016787">
    <property type="term" value="F:hydrolase activity"/>
    <property type="evidence" value="ECO:0000318"/>
    <property type="project" value="GO_Central"/>
</dbReference>
<dbReference type="FunFam" id="3.40.50.1820:FF:000022">
    <property type="entry name" value="Esterase FrsA"/>
    <property type="match status" value="1"/>
</dbReference>
<dbReference type="Gene3D" id="3.40.50.1820">
    <property type="entry name" value="alpha/beta hydrolase"/>
    <property type="match status" value="1"/>
</dbReference>
<dbReference type="HAMAP" id="MF_01063">
    <property type="entry name" value="FrsA"/>
    <property type="match status" value="1"/>
</dbReference>
<dbReference type="InterPro" id="IPR029058">
    <property type="entry name" value="AB_hydrolase_fold"/>
</dbReference>
<dbReference type="InterPro" id="IPR043423">
    <property type="entry name" value="FrsA"/>
</dbReference>
<dbReference type="InterPro" id="IPR010520">
    <property type="entry name" value="FrsA-like"/>
</dbReference>
<dbReference type="InterPro" id="IPR050261">
    <property type="entry name" value="FrsA_esterase"/>
</dbReference>
<dbReference type="NCBIfam" id="NF003460">
    <property type="entry name" value="PRK05077.1"/>
    <property type="match status" value="1"/>
</dbReference>
<dbReference type="PANTHER" id="PTHR22946">
    <property type="entry name" value="DIENELACTONE HYDROLASE DOMAIN-CONTAINING PROTEIN-RELATED"/>
    <property type="match status" value="1"/>
</dbReference>
<dbReference type="PANTHER" id="PTHR22946:SF4">
    <property type="entry name" value="ESTERASE FRSA"/>
    <property type="match status" value="1"/>
</dbReference>
<dbReference type="Pfam" id="PF06500">
    <property type="entry name" value="FrsA-like"/>
    <property type="match status" value="1"/>
</dbReference>
<dbReference type="SUPFAM" id="SSF53474">
    <property type="entry name" value="alpha/beta-Hydrolases"/>
    <property type="match status" value="1"/>
</dbReference>
<keyword id="KW-0378">Hydrolase</keyword>
<keyword id="KW-1185">Reference proteome</keyword>
<keyword id="KW-0719">Serine esterase</keyword>